<keyword id="KW-0285">Flavoprotein</keyword>
<keyword id="KW-0288">FMN</keyword>
<keyword id="KW-0521">NADP</keyword>
<keyword id="KW-0560">Oxidoreductase</keyword>
<keyword id="KW-1185">Reference proteome</keyword>
<keyword id="KW-0694">RNA-binding</keyword>
<keyword id="KW-0819">tRNA processing</keyword>
<keyword id="KW-0820">tRNA-binding</keyword>
<organism>
    <name type="scientific">Pasteurella multocida (strain Pm70)</name>
    <dbReference type="NCBI Taxonomy" id="272843"/>
    <lineage>
        <taxon>Bacteria</taxon>
        <taxon>Pseudomonadati</taxon>
        <taxon>Pseudomonadota</taxon>
        <taxon>Gammaproteobacteria</taxon>
        <taxon>Pasteurellales</taxon>
        <taxon>Pasteurellaceae</taxon>
        <taxon>Pasteurella</taxon>
    </lineage>
</organism>
<gene>
    <name evidence="1" type="primary">dusA</name>
    <name type="ordered locus">PM1418</name>
</gene>
<name>DUSA_PASMU</name>
<evidence type="ECO:0000255" key="1">
    <source>
        <dbReference type="HAMAP-Rule" id="MF_02041"/>
    </source>
</evidence>
<dbReference type="EC" id="1.3.1.-" evidence="1"/>
<dbReference type="EC" id="1.3.1.91" evidence="1"/>
<dbReference type="EMBL" id="AE004439">
    <property type="protein sequence ID" value="AAK03502.1"/>
    <property type="molecule type" value="Genomic_DNA"/>
</dbReference>
<dbReference type="RefSeq" id="WP_010907156.1">
    <property type="nucleotide sequence ID" value="NC_002663.1"/>
</dbReference>
<dbReference type="SMR" id="Q9CL29"/>
<dbReference type="STRING" id="272843.PM1418"/>
<dbReference type="EnsemblBacteria" id="AAK03502">
    <property type="protein sequence ID" value="AAK03502"/>
    <property type="gene ID" value="PM1418"/>
</dbReference>
<dbReference type="KEGG" id="pmu:PM1418"/>
<dbReference type="PATRIC" id="fig|272843.6.peg.1431"/>
<dbReference type="HOGENOM" id="CLU_013299_2_1_6"/>
<dbReference type="OrthoDB" id="9783413at2"/>
<dbReference type="Proteomes" id="UP000000809">
    <property type="component" value="Chromosome"/>
</dbReference>
<dbReference type="GO" id="GO:0050660">
    <property type="term" value="F:flavin adenine dinucleotide binding"/>
    <property type="evidence" value="ECO:0007669"/>
    <property type="project" value="InterPro"/>
</dbReference>
<dbReference type="GO" id="GO:0010181">
    <property type="term" value="F:FMN binding"/>
    <property type="evidence" value="ECO:0007669"/>
    <property type="project" value="UniProtKB-UniRule"/>
</dbReference>
<dbReference type="GO" id="GO:0000049">
    <property type="term" value="F:tRNA binding"/>
    <property type="evidence" value="ECO:0007669"/>
    <property type="project" value="UniProtKB-UniRule"/>
</dbReference>
<dbReference type="GO" id="GO:0102264">
    <property type="term" value="F:tRNA-dihydrouridine20 synthase activity"/>
    <property type="evidence" value="ECO:0007669"/>
    <property type="project" value="UniProtKB-EC"/>
</dbReference>
<dbReference type="GO" id="GO:0102266">
    <property type="term" value="F:tRNA-dihydrouridine20a synthase activity"/>
    <property type="evidence" value="ECO:0007669"/>
    <property type="project" value="RHEA"/>
</dbReference>
<dbReference type="CDD" id="cd02801">
    <property type="entry name" value="DUS_like_FMN"/>
    <property type="match status" value="1"/>
</dbReference>
<dbReference type="FunFam" id="3.20.20.70:FF:000083">
    <property type="entry name" value="tRNA-dihydrouridine(20/20a) synthase"/>
    <property type="match status" value="1"/>
</dbReference>
<dbReference type="Gene3D" id="1.20.120.1460">
    <property type="match status" value="1"/>
</dbReference>
<dbReference type="Gene3D" id="3.20.20.70">
    <property type="entry name" value="Aldolase class I"/>
    <property type="match status" value="1"/>
</dbReference>
<dbReference type="HAMAP" id="MF_02041">
    <property type="entry name" value="DusA_subfam"/>
    <property type="match status" value="1"/>
</dbReference>
<dbReference type="InterPro" id="IPR013785">
    <property type="entry name" value="Aldolase_TIM"/>
</dbReference>
<dbReference type="InterPro" id="IPR035587">
    <property type="entry name" value="DUS-like_FMN-bd"/>
</dbReference>
<dbReference type="InterPro" id="IPR001269">
    <property type="entry name" value="DUS_fam"/>
</dbReference>
<dbReference type="InterPro" id="IPR004653">
    <property type="entry name" value="DusA"/>
</dbReference>
<dbReference type="InterPro" id="IPR018517">
    <property type="entry name" value="tRNA_hU_synthase_CS"/>
</dbReference>
<dbReference type="NCBIfam" id="NF008774">
    <property type="entry name" value="PRK11815.1"/>
    <property type="match status" value="1"/>
</dbReference>
<dbReference type="NCBIfam" id="TIGR00742">
    <property type="entry name" value="yjbN"/>
    <property type="match status" value="1"/>
</dbReference>
<dbReference type="PANTHER" id="PTHR42907">
    <property type="entry name" value="FMN-LINKED OXIDOREDUCTASES SUPERFAMILY PROTEIN"/>
    <property type="match status" value="1"/>
</dbReference>
<dbReference type="PANTHER" id="PTHR42907:SF1">
    <property type="entry name" value="FMN-LINKED OXIDOREDUCTASES SUPERFAMILY PROTEIN"/>
    <property type="match status" value="1"/>
</dbReference>
<dbReference type="Pfam" id="PF01207">
    <property type="entry name" value="Dus"/>
    <property type="match status" value="1"/>
</dbReference>
<dbReference type="PIRSF" id="PIRSF006621">
    <property type="entry name" value="Dus"/>
    <property type="match status" value="1"/>
</dbReference>
<dbReference type="SUPFAM" id="SSF51395">
    <property type="entry name" value="FMN-linked oxidoreductases"/>
    <property type="match status" value="1"/>
</dbReference>
<dbReference type="PROSITE" id="PS01136">
    <property type="entry name" value="UPF0034"/>
    <property type="match status" value="1"/>
</dbReference>
<feature type="chain" id="PRO_0000162068" description="tRNA-dihydrouridine(20/20a) synthase">
    <location>
        <begin position="1"/>
        <end position="327"/>
    </location>
</feature>
<feature type="active site" description="Proton donor" evidence="1">
    <location>
        <position position="99"/>
    </location>
</feature>
<feature type="binding site" evidence="1">
    <location>
        <begin position="17"/>
        <end position="19"/>
    </location>
    <ligand>
        <name>FMN</name>
        <dbReference type="ChEBI" id="CHEBI:58210"/>
    </ligand>
</feature>
<feature type="binding site" evidence="1">
    <location>
        <position position="69"/>
    </location>
    <ligand>
        <name>FMN</name>
        <dbReference type="ChEBI" id="CHEBI:58210"/>
    </ligand>
</feature>
<feature type="binding site" evidence="1">
    <location>
        <position position="138"/>
    </location>
    <ligand>
        <name>FMN</name>
        <dbReference type="ChEBI" id="CHEBI:58210"/>
    </ligand>
</feature>
<feature type="binding site" evidence="1">
    <location>
        <position position="170"/>
    </location>
    <ligand>
        <name>FMN</name>
        <dbReference type="ChEBI" id="CHEBI:58210"/>
    </ligand>
</feature>
<feature type="binding site" evidence="1">
    <location>
        <begin position="210"/>
        <end position="212"/>
    </location>
    <ligand>
        <name>FMN</name>
        <dbReference type="ChEBI" id="CHEBI:58210"/>
    </ligand>
</feature>
<feature type="binding site" evidence="1">
    <location>
        <begin position="232"/>
        <end position="233"/>
    </location>
    <ligand>
        <name>FMN</name>
        <dbReference type="ChEBI" id="CHEBI:58210"/>
    </ligand>
</feature>
<feature type="site" description="Interacts with tRNA" evidence="1">
    <location>
        <position position="96"/>
    </location>
</feature>
<feature type="site" description="Interacts with tRNA; defines subfamily-specific binding signature" evidence="1">
    <location>
        <position position="182"/>
    </location>
</feature>
<feature type="site" description="Interacts with tRNA" evidence="1">
    <location>
        <position position="185"/>
    </location>
</feature>
<feature type="site" description="Interacts with tRNA; defines subfamily-specific binding signature" evidence="1">
    <location>
        <position position="298"/>
    </location>
</feature>
<feature type="site" description="Interacts with tRNA; defines subfamily-specific binding signature" evidence="1">
    <location>
        <position position="301"/>
    </location>
</feature>
<comment type="function">
    <text evidence="1">Catalyzes the synthesis of 5,6-dihydrouridine (D), a modified base found in the D-loop of most tRNAs, via the reduction of the C5-C6 double bond in target uridines. Specifically modifies U20 and U20a in tRNAs.</text>
</comment>
<comment type="catalytic activity">
    <reaction evidence="1">
        <text>5,6-dihydrouridine(20) in tRNA + NADP(+) = uridine(20) in tRNA + NADPH + H(+)</text>
        <dbReference type="Rhea" id="RHEA:53336"/>
        <dbReference type="Rhea" id="RHEA-COMP:13533"/>
        <dbReference type="Rhea" id="RHEA-COMP:13534"/>
        <dbReference type="ChEBI" id="CHEBI:15378"/>
        <dbReference type="ChEBI" id="CHEBI:57783"/>
        <dbReference type="ChEBI" id="CHEBI:58349"/>
        <dbReference type="ChEBI" id="CHEBI:65315"/>
        <dbReference type="ChEBI" id="CHEBI:74443"/>
        <dbReference type="EC" id="1.3.1.91"/>
    </reaction>
</comment>
<comment type="catalytic activity">
    <reaction evidence="1">
        <text>5,6-dihydrouridine(20) in tRNA + NAD(+) = uridine(20) in tRNA + NADH + H(+)</text>
        <dbReference type="Rhea" id="RHEA:53340"/>
        <dbReference type="Rhea" id="RHEA-COMP:13533"/>
        <dbReference type="Rhea" id="RHEA-COMP:13534"/>
        <dbReference type="ChEBI" id="CHEBI:15378"/>
        <dbReference type="ChEBI" id="CHEBI:57540"/>
        <dbReference type="ChEBI" id="CHEBI:57945"/>
        <dbReference type="ChEBI" id="CHEBI:65315"/>
        <dbReference type="ChEBI" id="CHEBI:74443"/>
        <dbReference type="EC" id="1.3.1.91"/>
    </reaction>
</comment>
<comment type="catalytic activity">
    <reaction evidence="1">
        <text>5,6-dihydrouridine(20a) in tRNA + NADP(+) = uridine(20a) in tRNA + NADPH + H(+)</text>
        <dbReference type="Rhea" id="RHEA:53344"/>
        <dbReference type="Rhea" id="RHEA-COMP:13535"/>
        <dbReference type="Rhea" id="RHEA-COMP:13536"/>
        <dbReference type="ChEBI" id="CHEBI:15378"/>
        <dbReference type="ChEBI" id="CHEBI:57783"/>
        <dbReference type="ChEBI" id="CHEBI:58349"/>
        <dbReference type="ChEBI" id="CHEBI:65315"/>
        <dbReference type="ChEBI" id="CHEBI:74443"/>
    </reaction>
</comment>
<comment type="catalytic activity">
    <reaction evidence="1">
        <text>5,6-dihydrouridine(20a) in tRNA + NAD(+) = uridine(20a) in tRNA + NADH + H(+)</text>
        <dbReference type="Rhea" id="RHEA:53348"/>
        <dbReference type="Rhea" id="RHEA-COMP:13535"/>
        <dbReference type="Rhea" id="RHEA-COMP:13536"/>
        <dbReference type="ChEBI" id="CHEBI:15378"/>
        <dbReference type="ChEBI" id="CHEBI:57540"/>
        <dbReference type="ChEBI" id="CHEBI:57945"/>
        <dbReference type="ChEBI" id="CHEBI:65315"/>
        <dbReference type="ChEBI" id="CHEBI:74443"/>
    </reaction>
</comment>
<comment type="cofactor">
    <cofactor evidence="1">
        <name>FMN</name>
        <dbReference type="ChEBI" id="CHEBI:58210"/>
    </cofactor>
</comment>
<comment type="similarity">
    <text evidence="1">Belongs to the Dus family. DusA subfamily.</text>
</comment>
<accession>Q9CL29</accession>
<sequence>MIQNQPHFYRGRFSVAPMLDWTTRHCRYFHRQFSQHALLYTEMVTTGAIIHAKYDHLEFSPAENPVALQLGGSDPTQLAQCAKIAQQRGYTEINLNVGCPSDRVQNGMFGACLMAKADLVADCVSAMQTEVSIPVTVKTRIGIDDLDSYEFLCEFVQKVHEAGCQEFIIHARKAWLSGLSPKENREIPPLDYERVYQLKRDFPHLLMSINGGIKTLEEMQQHLQYMDGVMVGREAYQNPSLLGYIDQALFDPTCPVVTPREAVEKMFPYIEQQLSQGVYLNHVVRHMLGAFQSCKGARQWRRYLSENAHKAGAGLEVVEKALSFVAS</sequence>
<protein>
    <recommendedName>
        <fullName evidence="1">tRNA-dihydrouridine(20/20a) synthase</fullName>
        <ecNumber evidence="1">1.3.1.-</ecNumber>
        <ecNumber evidence="1">1.3.1.91</ecNumber>
    </recommendedName>
    <alternativeName>
        <fullName evidence="1">U20-specific dihydrouridine synthase</fullName>
        <shortName evidence="1">U20-specific Dus</shortName>
    </alternativeName>
    <alternativeName>
        <fullName evidence="1">tRNA-dihydrouridine synthase A</fullName>
    </alternativeName>
</protein>
<proteinExistence type="inferred from homology"/>
<reference key="1">
    <citation type="journal article" date="2001" name="Proc. Natl. Acad. Sci. U.S.A.">
        <title>Complete genomic sequence of Pasteurella multocida Pm70.</title>
        <authorList>
            <person name="May B.J."/>
            <person name="Zhang Q."/>
            <person name="Li L.L."/>
            <person name="Paustian M.L."/>
            <person name="Whittam T.S."/>
            <person name="Kapur V."/>
        </authorList>
    </citation>
    <scope>NUCLEOTIDE SEQUENCE [LARGE SCALE GENOMIC DNA]</scope>
    <source>
        <strain>Pm70</strain>
    </source>
</reference>